<name>SYL_BIFAA</name>
<feature type="chain" id="PRO_0000334732" description="Leucine--tRNA ligase">
    <location>
        <begin position="1"/>
        <end position="990"/>
    </location>
</feature>
<feature type="region of interest" description="Disordered" evidence="2">
    <location>
        <begin position="573"/>
        <end position="602"/>
    </location>
</feature>
<feature type="short sequence motif" description="'HIGH' region">
    <location>
        <begin position="74"/>
        <end position="85"/>
    </location>
</feature>
<feature type="short sequence motif" description="'KMSKS' region">
    <location>
        <begin position="763"/>
        <end position="767"/>
    </location>
</feature>
<feature type="binding site" evidence="1">
    <location>
        <position position="766"/>
    </location>
    <ligand>
        <name>ATP</name>
        <dbReference type="ChEBI" id="CHEBI:30616"/>
    </ligand>
</feature>
<proteinExistence type="inferred from homology"/>
<accession>A1A1R2</accession>
<organism>
    <name type="scientific">Bifidobacterium adolescentis (strain ATCC 15703 / DSM 20083 / NCTC 11814 / E194a)</name>
    <dbReference type="NCBI Taxonomy" id="367928"/>
    <lineage>
        <taxon>Bacteria</taxon>
        <taxon>Bacillati</taxon>
        <taxon>Actinomycetota</taxon>
        <taxon>Actinomycetes</taxon>
        <taxon>Bifidobacteriales</taxon>
        <taxon>Bifidobacteriaceae</taxon>
        <taxon>Bifidobacterium</taxon>
    </lineage>
</organism>
<gene>
    <name evidence="1" type="primary">leuS</name>
    <name type="ordered locus">BAD_0864</name>
</gene>
<sequence>MSDTEKSAQAQPNESAEPSFRYNAKLAQGIEEKWQKIWDDEGTFWAANVNGDLKDGKGHNAEGRPSYFAMDMFPYPSGKGLHVGHPLGYLATDVVSRYHRMKGENVLHAMGYDAFGLPAEQYAVQTGQHPRITTEQNIANMRRQLHRMGLSFDNRRSFATIDPGYVRWTQWIFSRIYDAWYDEDATNPSGSRGCARPISTLVEQFESGKRAIPGFEGKAWADLSEAEQADVLNDFRLAYISKSPVNWCPGLGTVLANEEVTAEGKSERGNFPVFQRELRQWSMRITAYGHRLIEDLDTIDWPEKVKLMQRNWIGESHGASVHFDVETPNGVKDMEIYTTRPDTLFGTTFAVVSPEHHLLEDVPAEWPAETPEDWKGGYATPVEAVKAYRLAAEAKTAKDRVDEAGEKTGLFTGLYAINPITGAKLPLFTADYVLMDYGTGAIMAVPGGDQRDYDFAVKFGLPVIYTVKPLPESGDDLANYEGKAPFVSHDGIVINSSIDATKAKGDSLSLDGLRVDEAIDKVNAWLESAGVGKGTVSYRLRDWLFSRQRYWGEPFPIVYGEDGTPHLLPDEQLPINLPDVPDYSPKTFDPEDAESDPEAPLSRNEDWVKVELDLGDGKKTYYRDTNTMPNWAGSCWYYMRYLDPTDTKHMVEKDEFDYWMGPDHNKTAGKSGGVDLYIGGVEHAVLHLLYSRFWHKVLFDLGYVDSMEPFHKLFNQGMIQAYAYTDDRGQYVPAAEVVEGPADANGEPTFTWNGQHANREFGKMGKSLKNIITPDDMYENYGADTFRLYEMGMGPLAESRPWNTRNVVGSMRFLQRLWRNVIDETTGEVRVTDGELDTKTLKLLNNTIADVTVEMEAMRPNTAIAKLIVLNNHLTSLDAVPRAAVEPLILMLSPIAPHICEELWSKLGHTESLAHADWPKADERYVGQDSVTAVVQIKGKVRAKLEVSPDIDPKELEKMALEAVADRLGGKEPRKVIVKAPKIVSIVPAE</sequence>
<evidence type="ECO:0000255" key="1">
    <source>
        <dbReference type="HAMAP-Rule" id="MF_00049"/>
    </source>
</evidence>
<evidence type="ECO:0000256" key="2">
    <source>
        <dbReference type="SAM" id="MobiDB-lite"/>
    </source>
</evidence>
<reference key="1">
    <citation type="submission" date="2006-12" db="EMBL/GenBank/DDBJ databases">
        <title>Bifidobacterium adolescentis complete genome sequence.</title>
        <authorList>
            <person name="Suzuki T."/>
            <person name="Tsuda Y."/>
            <person name="Kanou N."/>
            <person name="Inoue T."/>
            <person name="Kumazaki K."/>
            <person name="Nagano S."/>
            <person name="Hirai S."/>
            <person name="Tanaka K."/>
            <person name="Watanabe K."/>
        </authorList>
    </citation>
    <scope>NUCLEOTIDE SEQUENCE [LARGE SCALE GENOMIC DNA]</scope>
    <source>
        <strain>ATCC 15703 / DSM 20083 / NCTC 11814 / E194a</strain>
    </source>
</reference>
<keyword id="KW-0030">Aminoacyl-tRNA synthetase</keyword>
<keyword id="KW-0067">ATP-binding</keyword>
<keyword id="KW-0963">Cytoplasm</keyword>
<keyword id="KW-0436">Ligase</keyword>
<keyword id="KW-0547">Nucleotide-binding</keyword>
<keyword id="KW-0648">Protein biosynthesis</keyword>
<keyword id="KW-1185">Reference proteome</keyword>
<dbReference type="EC" id="6.1.1.4" evidence="1"/>
<dbReference type="EMBL" id="AP009256">
    <property type="protein sequence ID" value="BAF39645.1"/>
    <property type="molecule type" value="Genomic_DNA"/>
</dbReference>
<dbReference type="RefSeq" id="WP_011743229.1">
    <property type="nucleotide sequence ID" value="NC_008618.1"/>
</dbReference>
<dbReference type="SMR" id="A1A1R2"/>
<dbReference type="STRING" id="367928.BAD_0864"/>
<dbReference type="PaxDb" id="1680-BADO_0919"/>
<dbReference type="GeneID" id="4556281"/>
<dbReference type="KEGG" id="bad:BAD_0864"/>
<dbReference type="HOGENOM" id="CLU_004427_0_0_11"/>
<dbReference type="Proteomes" id="UP000008702">
    <property type="component" value="Chromosome"/>
</dbReference>
<dbReference type="GO" id="GO:0005829">
    <property type="term" value="C:cytosol"/>
    <property type="evidence" value="ECO:0007669"/>
    <property type="project" value="TreeGrafter"/>
</dbReference>
<dbReference type="GO" id="GO:0002161">
    <property type="term" value="F:aminoacyl-tRNA deacylase activity"/>
    <property type="evidence" value="ECO:0007669"/>
    <property type="project" value="InterPro"/>
</dbReference>
<dbReference type="GO" id="GO:0005524">
    <property type="term" value="F:ATP binding"/>
    <property type="evidence" value="ECO:0007669"/>
    <property type="project" value="UniProtKB-UniRule"/>
</dbReference>
<dbReference type="GO" id="GO:0004823">
    <property type="term" value="F:leucine-tRNA ligase activity"/>
    <property type="evidence" value="ECO:0007669"/>
    <property type="project" value="UniProtKB-UniRule"/>
</dbReference>
<dbReference type="GO" id="GO:0006429">
    <property type="term" value="P:leucyl-tRNA aminoacylation"/>
    <property type="evidence" value="ECO:0007669"/>
    <property type="project" value="UniProtKB-UniRule"/>
</dbReference>
<dbReference type="CDD" id="cd07958">
    <property type="entry name" value="Anticodon_Ia_Leu_BEm"/>
    <property type="match status" value="1"/>
</dbReference>
<dbReference type="FunFam" id="3.40.50.620:FF:000056">
    <property type="entry name" value="Leucine--tRNA ligase"/>
    <property type="match status" value="1"/>
</dbReference>
<dbReference type="FunFam" id="3.40.50.620:FF:000060">
    <property type="entry name" value="Leucine--tRNA ligase"/>
    <property type="match status" value="1"/>
</dbReference>
<dbReference type="FunFam" id="3.40.50.620:FF:000087">
    <property type="entry name" value="Leucine--tRNA ligase"/>
    <property type="match status" value="1"/>
</dbReference>
<dbReference type="FunFam" id="1.10.730.10:FF:000011">
    <property type="entry name" value="Leucine--tRNA ligase chloroplastic/mitochondrial"/>
    <property type="match status" value="1"/>
</dbReference>
<dbReference type="Gene3D" id="3.40.50.620">
    <property type="entry name" value="HUPs"/>
    <property type="match status" value="3"/>
</dbReference>
<dbReference type="Gene3D" id="1.10.730.10">
    <property type="entry name" value="Isoleucyl-tRNA Synthetase, Domain 1"/>
    <property type="match status" value="1"/>
</dbReference>
<dbReference type="Gene3D" id="3.90.740.10">
    <property type="entry name" value="Valyl/Leucyl/Isoleucyl-tRNA synthetase, editing domain"/>
    <property type="match status" value="1"/>
</dbReference>
<dbReference type="HAMAP" id="MF_00049_B">
    <property type="entry name" value="Leu_tRNA_synth_B"/>
    <property type="match status" value="1"/>
</dbReference>
<dbReference type="InterPro" id="IPR001412">
    <property type="entry name" value="aa-tRNA-synth_I_CS"/>
</dbReference>
<dbReference type="InterPro" id="IPR002302">
    <property type="entry name" value="Leu-tRNA-ligase"/>
</dbReference>
<dbReference type="InterPro" id="IPR025709">
    <property type="entry name" value="Leu_tRNA-synth_edit"/>
</dbReference>
<dbReference type="InterPro" id="IPR013155">
    <property type="entry name" value="M/V/L/I-tRNA-synth_anticd-bd"/>
</dbReference>
<dbReference type="InterPro" id="IPR015413">
    <property type="entry name" value="Methionyl/Leucyl_tRNA_Synth"/>
</dbReference>
<dbReference type="InterPro" id="IPR014729">
    <property type="entry name" value="Rossmann-like_a/b/a_fold"/>
</dbReference>
<dbReference type="InterPro" id="IPR009080">
    <property type="entry name" value="tRNAsynth_Ia_anticodon-bd"/>
</dbReference>
<dbReference type="InterPro" id="IPR009008">
    <property type="entry name" value="Val/Leu/Ile-tRNA-synth_edit"/>
</dbReference>
<dbReference type="NCBIfam" id="TIGR00396">
    <property type="entry name" value="leuS_bact"/>
    <property type="match status" value="1"/>
</dbReference>
<dbReference type="PANTHER" id="PTHR43740:SF2">
    <property type="entry name" value="LEUCINE--TRNA LIGASE, MITOCHONDRIAL"/>
    <property type="match status" value="1"/>
</dbReference>
<dbReference type="PANTHER" id="PTHR43740">
    <property type="entry name" value="LEUCYL-TRNA SYNTHETASE"/>
    <property type="match status" value="1"/>
</dbReference>
<dbReference type="Pfam" id="PF08264">
    <property type="entry name" value="Anticodon_1"/>
    <property type="match status" value="1"/>
</dbReference>
<dbReference type="Pfam" id="PF13603">
    <property type="entry name" value="tRNA-synt_1_2"/>
    <property type="match status" value="1"/>
</dbReference>
<dbReference type="Pfam" id="PF09334">
    <property type="entry name" value="tRNA-synt_1g"/>
    <property type="match status" value="1"/>
</dbReference>
<dbReference type="PRINTS" id="PR00985">
    <property type="entry name" value="TRNASYNTHLEU"/>
</dbReference>
<dbReference type="SUPFAM" id="SSF47323">
    <property type="entry name" value="Anticodon-binding domain of a subclass of class I aminoacyl-tRNA synthetases"/>
    <property type="match status" value="1"/>
</dbReference>
<dbReference type="SUPFAM" id="SSF52374">
    <property type="entry name" value="Nucleotidylyl transferase"/>
    <property type="match status" value="1"/>
</dbReference>
<dbReference type="SUPFAM" id="SSF50677">
    <property type="entry name" value="ValRS/IleRS/LeuRS editing domain"/>
    <property type="match status" value="1"/>
</dbReference>
<dbReference type="PROSITE" id="PS00178">
    <property type="entry name" value="AA_TRNA_LIGASE_I"/>
    <property type="match status" value="1"/>
</dbReference>
<comment type="catalytic activity">
    <reaction evidence="1">
        <text>tRNA(Leu) + L-leucine + ATP = L-leucyl-tRNA(Leu) + AMP + diphosphate</text>
        <dbReference type="Rhea" id="RHEA:11688"/>
        <dbReference type="Rhea" id="RHEA-COMP:9613"/>
        <dbReference type="Rhea" id="RHEA-COMP:9622"/>
        <dbReference type="ChEBI" id="CHEBI:30616"/>
        <dbReference type="ChEBI" id="CHEBI:33019"/>
        <dbReference type="ChEBI" id="CHEBI:57427"/>
        <dbReference type="ChEBI" id="CHEBI:78442"/>
        <dbReference type="ChEBI" id="CHEBI:78494"/>
        <dbReference type="ChEBI" id="CHEBI:456215"/>
        <dbReference type="EC" id="6.1.1.4"/>
    </reaction>
</comment>
<comment type="subcellular location">
    <subcellularLocation>
        <location evidence="1">Cytoplasm</location>
    </subcellularLocation>
</comment>
<comment type="similarity">
    <text evidence="1">Belongs to the class-I aminoacyl-tRNA synthetase family.</text>
</comment>
<protein>
    <recommendedName>
        <fullName evidence="1">Leucine--tRNA ligase</fullName>
        <ecNumber evidence="1">6.1.1.4</ecNumber>
    </recommendedName>
    <alternativeName>
        <fullName evidence="1">Leucyl-tRNA synthetase</fullName>
        <shortName evidence="1">LeuRS</shortName>
    </alternativeName>
</protein>